<reference key="1">
    <citation type="journal article" date="2000" name="Biochem. J.">
        <title>Identification of three human type-II classic cadherins and frequent heterophilic interactions between different subclasses of type-II classic cadherins.</title>
        <authorList>
            <person name="Shimoyama Y."/>
            <person name="Tsujimoto G."/>
            <person name="Kitajima M."/>
            <person name="Natori M."/>
        </authorList>
    </citation>
    <scope>NUCLEOTIDE SEQUENCE [MRNA]</scope>
</reference>
<reference key="2">
    <citation type="journal article" date="2004" name="Nat. Genet.">
        <title>Complete sequencing and characterization of 21,243 full-length human cDNAs.</title>
        <authorList>
            <person name="Ota T."/>
            <person name="Suzuki Y."/>
            <person name="Nishikawa T."/>
            <person name="Otsuki T."/>
            <person name="Sugiyama T."/>
            <person name="Irie R."/>
            <person name="Wakamatsu A."/>
            <person name="Hayashi K."/>
            <person name="Sato H."/>
            <person name="Nagai K."/>
            <person name="Kimura K."/>
            <person name="Makita H."/>
            <person name="Sekine M."/>
            <person name="Obayashi M."/>
            <person name="Nishi T."/>
            <person name="Shibahara T."/>
            <person name="Tanaka T."/>
            <person name="Ishii S."/>
            <person name="Yamamoto J."/>
            <person name="Saito K."/>
            <person name="Kawai Y."/>
            <person name="Isono Y."/>
            <person name="Nakamura Y."/>
            <person name="Nagahari K."/>
            <person name="Murakami K."/>
            <person name="Yasuda T."/>
            <person name="Iwayanagi T."/>
            <person name="Wagatsuma M."/>
            <person name="Shiratori A."/>
            <person name="Sudo H."/>
            <person name="Hosoiri T."/>
            <person name="Kaku Y."/>
            <person name="Kodaira H."/>
            <person name="Kondo H."/>
            <person name="Sugawara M."/>
            <person name="Takahashi M."/>
            <person name="Kanda K."/>
            <person name="Yokoi T."/>
            <person name="Furuya T."/>
            <person name="Kikkawa E."/>
            <person name="Omura Y."/>
            <person name="Abe K."/>
            <person name="Kamihara K."/>
            <person name="Katsuta N."/>
            <person name="Sato K."/>
            <person name="Tanikawa M."/>
            <person name="Yamazaki M."/>
            <person name="Ninomiya K."/>
            <person name="Ishibashi T."/>
            <person name="Yamashita H."/>
            <person name="Murakawa K."/>
            <person name="Fujimori K."/>
            <person name="Tanai H."/>
            <person name="Kimata M."/>
            <person name="Watanabe M."/>
            <person name="Hiraoka S."/>
            <person name="Chiba Y."/>
            <person name="Ishida S."/>
            <person name="Ono Y."/>
            <person name="Takiguchi S."/>
            <person name="Watanabe S."/>
            <person name="Yosida M."/>
            <person name="Hotuta T."/>
            <person name="Kusano J."/>
            <person name="Kanehori K."/>
            <person name="Takahashi-Fujii A."/>
            <person name="Hara H."/>
            <person name="Tanase T.-O."/>
            <person name="Nomura Y."/>
            <person name="Togiya S."/>
            <person name="Komai F."/>
            <person name="Hara R."/>
            <person name="Takeuchi K."/>
            <person name="Arita M."/>
            <person name="Imose N."/>
            <person name="Musashino K."/>
            <person name="Yuuki H."/>
            <person name="Oshima A."/>
            <person name="Sasaki N."/>
            <person name="Aotsuka S."/>
            <person name="Yoshikawa Y."/>
            <person name="Matsunawa H."/>
            <person name="Ichihara T."/>
            <person name="Shiohata N."/>
            <person name="Sano S."/>
            <person name="Moriya S."/>
            <person name="Momiyama H."/>
            <person name="Satoh N."/>
            <person name="Takami S."/>
            <person name="Terashima Y."/>
            <person name="Suzuki O."/>
            <person name="Nakagawa S."/>
            <person name="Senoh A."/>
            <person name="Mizoguchi H."/>
            <person name="Goto Y."/>
            <person name="Shimizu F."/>
            <person name="Wakebe H."/>
            <person name="Hishigaki H."/>
            <person name="Watanabe T."/>
            <person name="Sugiyama A."/>
            <person name="Takemoto M."/>
            <person name="Kawakami B."/>
            <person name="Yamazaki M."/>
            <person name="Watanabe K."/>
            <person name="Kumagai A."/>
            <person name="Itakura S."/>
            <person name="Fukuzumi Y."/>
            <person name="Fujimori Y."/>
            <person name="Komiyama M."/>
            <person name="Tashiro H."/>
            <person name="Tanigami A."/>
            <person name="Fujiwara T."/>
            <person name="Ono T."/>
            <person name="Yamada K."/>
            <person name="Fujii Y."/>
            <person name="Ozaki K."/>
            <person name="Hirao M."/>
            <person name="Ohmori Y."/>
            <person name="Kawabata A."/>
            <person name="Hikiji T."/>
            <person name="Kobatake N."/>
            <person name="Inagaki H."/>
            <person name="Ikema Y."/>
            <person name="Okamoto S."/>
            <person name="Okitani R."/>
            <person name="Kawakami T."/>
            <person name="Noguchi S."/>
            <person name="Itoh T."/>
            <person name="Shigeta K."/>
            <person name="Senba T."/>
            <person name="Matsumura K."/>
            <person name="Nakajima Y."/>
            <person name="Mizuno T."/>
            <person name="Morinaga M."/>
            <person name="Sasaki M."/>
            <person name="Togashi T."/>
            <person name="Oyama M."/>
            <person name="Hata H."/>
            <person name="Watanabe M."/>
            <person name="Komatsu T."/>
            <person name="Mizushima-Sugano J."/>
            <person name="Satoh T."/>
            <person name="Shirai Y."/>
            <person name="Takahashi Y."/>
            <person name="Nakagawa K."/>
            <person name="Okumura K."/>
            <person name="Nagase T."/>
            <person name="Nomura N."/>
            <person name="Kikuchi H."/>
            <person name="Masuho Y."/>
            <person name="Yamashita R."/>
            <person name="Nakai K."/>
            <person name="Yada T."/>
            <person name="Nakamura Y."/>
            <person name="Ohara O."/>
            <person name="Isogai T."/>
            <person name="Sugano S."/>
        </authorList>
    </citation>
    <scope>NUCLEOTIDE SEQUENCE [LARGE SCALE MRNA]</scope>
    <source>
        <tissue>Brain</tissue>
    </source>
</reference>
<reference key="3">
    <citation type="journal article" date="2004" name="Genome Res.">
        <title>The status, quality, and expansion of the NIH full-length cDNA project: the Mammalian Gene Collection (MGC).</title>
        <authorList>
            <consortium name="The MGC Project Team"/>
        </authorList>
    </citation>
    <scope>NUCLEOTIDE SEQUENCE [LARGE SCALE MRNA]</scope>
    <source>
        <tissue>Brain</tissue>
    </source>
</reference>
<reference key="4">
    <citation type="journal article" date="1994" name="Cell Adhes. Commun.">
        <title>Cloning of five human cadherins clarifies characteristic features of cadherin extracellular domain and provides further evidence for two structurally different types of cadherin.</title>
        <authorList>
            <person name="Tanihara H."/>
            <person name="Sano K."/>
            <person name="Heimark R.L."/>
            <person name="St John T."/>
            <person name="Suzuki S."/>
        </authorList>
    </citation>
    <scope>NUCLEOTIDE SEQUENCE [MRNA] OF 7-799</scope>
    <source>
        <tissue>Brain</tissue>
    </source>
</reference>
<reference key="5">
    <citation type="journal article" date="1991" name="Cell Regul.">
        <title>Diversity of the cadherin family: evidence for eight new cadherins in nervous tissue.</title>
        <authorList>
            <person name="Suzuki S."/>
            <person name="Sano K."/>
            <person name="Tanihara H."/>
        </authorList>
    </citation>
    <scope>NUCLEOTIDE SEQUENCE [MRNA] OF 294-799</scope>
    <source>
        <tissue>Fetal brain</tissue>
    </source>
</reference>
<name>CADH8_HUMAN</name>
<gene>
    <name type="primary">CDH8</name>
</gene>
<proteinExistence type="evidence at protein level"/>
<evidence type="ECO:0000250" key="1"/>
<evidence type="ECO:0000250" key="2">
    <source>
        <dbReference type="UniProtKB" id="P97291"/>
    </source>
</evidence>
<evidence type="ECO:0000255" key="3"/>
<evidence type="ECO:0000255" key="4">
    <source>
        <dbReference type="PROSITE-ProRule" id="PRU00043"/>
    </source>
</evidence>
<evidence type="ECO:0000305" key="5"/>
<organism>
    <name type="scientific">Homo sapiens</name>
    <name type="common">Human</name>
    <dbReference type="NCBI Taxonomy" id="9606"/>
    <lineage>
        <taxon>Eukaryota</taxon>
        <taxon>Metazoa</taxon>
        <taxon>Chordata</taxon>
        <taxon>Craniata</taxon>
        <taxon>Vertebrata</taxon>
        <taxon>Euteleostomi</taxon>
        <taxon>Mammalia</taxon>
        <taxon>Eutheria</taxon>
        <taxon>Euarchontoglires</taxon>
        <taxon>Primates</taxon>
        <taxon>Haplorrhini</taxon>
        <taxon>Catarrhini</taxon>
        <taxon>Hominidae</taxon>
        <taxon>Homo</taxon>
    </lineage>
</organism>
<accession>P55286</accession>
<accession>B3KWC1</accession>
<accession>Q14DC6</accession>
<accession>Q9ULB2</accession>
<keyword id="KW-0106">Calcium</keyword>
<keyword id="KW-0130">Cell adhesion</keyword>
<keyword id="KW-1003">Cell membrane</keyword>
<keyword id="KW-0165">Cleavage on pair of basic residues</keyword>
<keyword id="KW-0325">Glycoprotein</keyword>
<keyword id="KW-0472">Membrane</keyword>
<keyword id="KW-0479">Metal-binding</keyword>
<keyword id="KW-0597">Phosphoprotein</keyword>
<keyword id="KW-1267">Proteomics identification</keyword>
<keyword id="KW-1185">Reference proteome</keyword>
<keyword id="KW-0677">Repeat</keyword>
<keyword id="KW-0732">Signal</keyword>
<keyword id="KW-0812">Transmembrane</keyword>
<keyword id="KW-1133">Transmembrane helix</keyword>
<feature type="signal peptide" evidence="3">
    <location>
        <begin position="1"/>
        <end position="29"/>
    </location>
</feature>
<feature type="propeptide" id="PRO_0000003773" evidence="3">
    <location>
        <begin position="30"/>
        <end position="61"/>
    </location>
</feature>
<feature type="chain" id="PRO_0000003774" description="Cadherin-8">
    <location>
        <begin position="62"/>
        <end position="799"/>
    </location>
</feature>
<feature type="topological domain" description="Extracellular" evidence="3">
    <location>
        <begin position="62"/>
        <end position="621"/>
    </location>
</feature>
<feature type="transmembrane region" description="Helical" evidence="3">
    <location>
        <begin position="622"/>
        <end position="642"/>
    </location>
</feature>
<feature type="topological domain" description="Cytoplasmic" evidence="3">
    <location>
        <begin position="643"/>
        <end position="799"/>
    </location>
</feature>
<feature type="domain" description="Cadherin 1" evidence="4">
    <location>
        <begin position="62"/>
        <end position="167"/>
    </location>
</feature>
<feature type="domain" description="Cadherin 2" evidence="4">
    <location>
        <begin position="168"/>
        <end position="276"/>
    </location>
</feature>
<feature type="domain" description="Cadherin 3" evidence="4">
    <location>
        <begin position="277"/>
        <end position="391"/>
    </location>
</feature>
<feature type="domain" description="Cadherin 4" evidence="4">
    <location>
        <begin position="392"/>
        <end position="494"/>
    </location>
</feature>
<feature type="domain" description="Cadherin 5" evidence="4">
    <location>
        <begin position="495"/>
        <end position="616"/>
    </location>
</feature>
<feature type="modified residue" description="Phosphoserine" evidence="2">
    <location>
        <position position="795"/>
    </location>
</feature>
<feature type="glycosylation site" description="N-linked (GlcNAc...) asparagine" evidence="3">
    <location>
        <position position="33"/>
    </location>
</feature>
<feature type="glycosylation site" description="N-linked (GlcNAc...) asparagine" evidence="3">
    <location>
        <position position="57"/>
    </location>
</feature>
<feature type="glycosylation site" description="N-linked (GlcNAc...) asparagine" evidence="3">
    <location>
        <position position="188"/>
    </location>
</feature>
<feature type="glycosylation site" description="N-linked (GlcNAc...) asparagine" evidence="3">
    <location>
        <position position="463"/>
    </location>
</feature>
<feature type="glycosylation site" description="N-linked (GlcNAc...) asparagine" evidence="3">
    <location>
        <position position="473"/>
    </location>
</feature>
<feature type="glycosylation site" description="N-linked (GlcNAc...) asparagine" evidence="3">
    <location>
        <position position="544"/>
    </location>
</feature>
<feature type="sequence conflict" description="In Ref. 4; AAA35628." evidence="5" ref="4">
    <original>V</original>
    <variation>D</variation>
    <location>
        <position position="355"/>
    </location>
</feature>
<feature type="sequence conflict" description="In Ref. 4; AAA35628." evidence="5" ref="4">
    <original>K</original>
    <variation>QK</variation>
    <location>
        <position position="648"/>
    </location>
</feature>
<sequence>MPERLAEMLLDLWTPLIILWITLPPCIYMAPMNQSQVLMSGSPLELNSLGEEQRILNRSKRGWVWNQMFVLEEFSGPEPILVGRLHTDLDPGSKKIKYILSGDGAGTIFQINDVTGDIHAIKRLDREEKAEYTLTAQAVDWETSKPLEPPSEFIIKVQDINDNAPEFLNGPYHATVPEMSILGTSVTNVTATDADDPVYGNSAKLVYSILEGQPYFSIEPETAIIKTALPNMDREAKEEYLVVIQAKDMGGHSGGLSGTTTLTVTLTDVNDNPPKFAQSLYHFSVPEDVVLGTAIGRVKANDQDIGENAQSSYDIIDGDGTALFEITSDAQAQDGIIRLRKPLDFETKKSYTLKVEAANVHIDPRFSGRGPFKDTATVKIVVEDADEPPVFSSPTYLLEVHENAALNSVIGQVTARDPDITSSPIRFSIDRHTDLERQFNINADDGKITLATPLDRELSVWHNITIIATEIRNHSQISRVPVAIKVLDVNDNAPEFASEYEAFLCENGKPGQVIQTVSAMDKDDPKNGHYFLYSLLPEMVNNPNFTIKKNEDNSLSILAKHNGFNRQKQEVYLLPIIISDSGNPPLSSTSTLTIRVCGCSNDGVVQSCNVEAYVLPIGLSMGALIAILACIILLLVIVVLFVTLRRHKNEPLIIKDDEDVRENIIRYDDEGGGEEDTEAFDIATLQNPDGINGFLPRKDIKPDLQFMPRQGLAPVPNGVDVDEFINVRLHEADNDPTAPPYDSIQIYGYEGRGSVAGSLSSLESTTSDSDQNFDYLSDWGPRFKRLGELYSVGESDKET</sequence>
<protein>
    <recommendedName>
        <fullName>Cadherin-8</fullName>
    </recommendedName>
</protein>
<comment type="function">
    <text>Cadherins are calcium-dependent cell adhesion proteins. They preferentially interact with themselves in a homophilic manner in connecting cells; cadherins may thus contribute to the sorting of heterogeneous cell types.</text>
</comment>
<comment type="subcellular location">
    <subcellularLocation>
        <location>Cell membrane</location>
        <topology>Single-pass type I membrane protein</topology>
    </subcellularLocation>
</comment>
<comment type="tissue specificity">
    <text>Mainly expressed in brain. Found in certain nerve cell lines, such as retinoblasts, glioma cells and neuroblasts.</text>
</comment>
<comment type="domain">
    <text evidence="1">Three calcium ions are usually bound at the interface of each cadherin domain and rigidify the connections, imparting a strong curvature to the full-length ectodomain.</text>
</comment>
<comment type="sequence caution" evidence="5">
    <conflict type="erroneous initiation">
        <sequence resource="EMBL-CDS" id="AAA35628"/>
    </conflict>
    <text>Truncated N-terminus.</text>
</comment>
<dbReference type="EMBL" id="AB035305">
    <property type="protein sequence ID" value="BAA87419.1"/>
    <property type="molecule type" value="mRNA"/>
</dbReference>
<dbReference type="EMBL" id="AK124734">
    <property type="protein sequence ID" value="BAG54083.1"/>
    <property type="molecule type" value="mRNA"/>
</dbReference>
<dbReference type="EMBL" id="BC113416">
    <property type="protein sequence ID" value="AAI13417.1"/>
    <property type="molecule type" value="mRNA"/>
</dbReference>
<dbReference type="EMBL" id="L34060">
    <property type="protein sequence ID" value="AAA35628.1"/>
    <property type="status" value="ALT_INIT"/>
    <property type="molecule type" value="mRNA"/>
</dbReference>
<dbReference type="CCDS" id="CCDS10802.1"/>
<dbReference type="RefSeq" id="NP_001787.2">
    <property type="nucleotide sequence ID" value="NM_001796.4"/>
</dbReference>
<dbReference type="SMR" id="P55286"/>
<dbReference type="BioGRID" id="107441">
    <property type="interactions" value="21"/>
</dbReference>
<dbReference type="FunCoup" id="P55286">
    <property type="interactions" value="205"/>
</dbReference>
<dbReference type="IntAct" id="P55286">
    <property type="interactions" value="21"/>
</dbReference>
<dbReference type="STRING" id="9606.ENSP00000462701"/>
<dbReference type="GlyCosmos" id="P55286">
    <property type="glycosylation" value="6 sites, No reported glycans"/>
</dbReference>
<dbReference type="GlyGen" id="P55286">
    <property type="glycosylation" value="6 sites"/>
</dbReference>
<dbReference type="iPTMnet" id="P55286"/>
<dbReference type="PhosphoSitePlus" id="P55286"/>
<dbReference type="BioMuta" id="CDH8"/>
<dbReference type="DMDM" id="13432121"/>
<dbReference type="MassIVE" id="P55286"/>
<dbReference type="PaxDb" id="9606-ENSP00000462701"/>
<dbReference type="PeptideAtlas" id="P55286"/>
<dbReference type="ProteomicsDB" id="56836"/>
<dbReference type="TopDownProteomics" id="P55286"/>
<dbReference type="Antibodypedia" id="2754">
    <property type="antibodies" value="213 antibodies from 27 providers"/>
</dbReference>
<dbReference type="DNASU" id="1006"/>
<dbReference type="Ensembl" id="ENST00000577390.6">
    <property type="protein sequence ID" value="ENSP00000462701.1"/>
    <property type="gene ID" value="ENSG00000150394.14"/>
</dbReference>
<dbReference type="GeneID" id="1006"/>
<dbReference type="KEGG" id="hsa:1006"/>
<dbReference type="MANE-Select" id="ENST00000577390.6">
    <property type="protein sequence ID" value="ENSP00000462701.1"/>
    <property type="RefSeq nucleotide sequence ID" value="NM_001796.5"/>
    <property type="RefSeq protein sequence ID" value="NP_001787.2"/>
</dbReference>
<dbReference type="UCSC" id="uc002eog.3">
    <property type="organism name" value="human"/>
</dbReference>
<dbReference type="AGR" id="HGNC:1767"/>
<dbReference type="CTD" id="1006"/>
<dbReference type="DisGeNET" id="1006"/>
<dbReference type="GeneCards" id="CDH8"/>
<dbReference type="HGNC" id="HGNC:1767">
    <property type="gene designation" value="CDH8"/>
</dbReference>
<dbReference type="HPA" id="ENSG00000150394">
    <property type="expression patterns" value="Group enriched (brain, seminal vesicle)"/>
</dbReference>
<dbReference type="MalaCards" id="CDH8"/>
<dbReference type="MIM" id="603008">
    <property type="type" value="gene"/>
</dbReference>
<dbReference type="neXtProt" id="NX_P55286"/>
<dbReference type="OpenTargets" id="ENSG00000150394"/>
<dbReference type="PharmGKB" id="PA26304"/>
<dbReference type="VEuPathDB" id="HostDB:ENSG00000150394"/>
<dbReference type="eggNOG" id="KOG3594">
    <property type="taxonomic scope" value="Eukaryota"/>
</dbReference>
<dbReference type="GeneTree" id="ENSGT00940000153691"/>
<dbReference type="HOGENOM" id="CLU_005284_3_1_1"/>
<dbReference type="InParanoid" id="P55286"/>
<dbReference type="OMA" id="IYMAPMA"/>
<dbReference type="OrthoDB" id="8188793at2759"/>
<dbReference type="PAN-GO" id="P55286">
    <property type="GO annotations" value="12 GO annotations based on evolutionary models"/>
</dbReference>
<dbReference type="PhylomeDB" id="P55286"/>
<dbReference type="TreeFam" id="TF329887"/>
<dbReference type="PathwayCommons" id="P55286"/>
<dbReference type="Reactome" id="R-HSA-418990">
    <property type="pathway name" value="Adherens junctions interactions"/>
</dbReference>
<dbReference type="Reactome" id="R-HSA-9833576">
    <property type="pathway name" value="CDH11 homotypic and heterotypic interactions"/>
</dbReference>
<dbReference type="SignaLink" id="P55286"/>
<dbReference type="SIGNOR" id="P55286"/>
<dbReference type="BioGRID-ORCS" id="1006">
    <property type="hits" value="12 hits in 1146 CRISPR screens"/>
</dbReference>
<dbReference type="ChiTaRS" id="CDH8">
    <property type="organism name" value="human"/>
</dbReference>
<dbReference type="GeneWiki" id="CDH8"/>
<dbReference type="GenomeRNAi" id="1006"/>
<dbReference type="Pharos" id="P55286">
    <property type="development level" value="Tbio"/>
</dbReference>
<dbReference type="PRO" id="PR:P55286"/>
<dbReference type="Proteomes" id="UP000005640">
    <property type="component" value="Chromosome 16"/>
</dbReference>
<dbReference type="RNAct" id="P55286">
    <property type="molecule type" value="protein"/>
</dbReference>
<dbReference type="Bgee" id="ENSG00000150394">
    <property type="expression patterns" value="Expressed in endothelial cell and 135 other cell types or tissues"/>
</dbReference>
<dbReference type="ExpressionAtlas" id="P55286">
    <property type="expression patterns" value="baseline and differential"/>
</dbReference>
<dbReference type="GO" id="GO:0005912">
    <property type="term" value="C:adherens junction"/>
    <property type="evidence" value="ECO:0000318"/>
    <property type="project" value="GO_Central"/>
</dbReference>
<dbReference type="GO" id="GO:0043679">
    <property type="term" value="C:axon terminus"/>
    <property type="evidence" value="ECO:0000318"/>
    <property type="project" value="GO_Central"/>
</dbReference>
<dbReference type="GO" id="GO:0016342">
    <property type="term" value="C:catenin complex"/>
    <property type="evidence" value="ECO:0000318"/>
    <property type="project" value="GO_Central"/>
</dbReference>
<dbReference type="GO" id="GO:0098978">
    <property type="term" value="C:glutamatergic synapse"/>
    <property type="evidence" value="ECO:0007669"/>
    <property type="project" value="Ensembl"/>
</dbReference>
<dbReference type="GO" id="GO:0005886">
    <property type="term" value="C:plasma membrane"/>
    <property type="evidence" value="ECO:0000314"/>
    <property type="project" value="HPA"/>
</dbReference>
<dbReference type="GO" id="GO:0043083">
    <property type="term" value="C:synaptic cleft"/>
    <property type="evidence" value="ECO:0000318"/>
    <property type="project" value="GO_Central"/>
</dbReference>
<dbReference type="GO" id="GO:0097060">
    <property type="term" value="C:synaptic membrane"/>
    <property type="evidence" value="ECO:0007669"/>
    <property type="project" value="Ensembl"/>
</dbReference>
<dbReference type="GO" id="GO:0008013">
    <property type="term" value="F:beta-catenin binding"/>
    <property type="evidence" value="ECO:0000318"/>
    <property type="project" value="GO_Central"/>
</dbReference>
<dbReference type="GO" id="GO:0045296">
    <property type="term" value="F:cadherin binding"/>
    <property type="evidence" value="ECO:0000318"/>
    <property type="project" value="GO_Central"/>
</dbReference>
<dbReference type="GO" id="GO:0005509">
    <property type="term" value="F:calcium ion binding"/>
    <property type="evidence" value="ECO:0007669"/>
    <property type="project" value="InterPro"/>
</dbReference>
<dbReference type="GO" id="GO:0042802">
    <property type="term" value="F:identical protein binding"/>
    <property type="evidence" value="ECO:0007669"/>
    <property type="project" value="Ensembl"/>
</dbReference>
<dbReference type="GO" id="GO:0034332">
    <property type="term" value="P:adherens junction organization"/>
    <property type="evidence" value="ECO:0000318"/>
    <property type="project" value="GO_Central"/>
</dbReference>
<dbReference type="GO" id="GO:0016339">
    <property type="term" value="P:calcium-dependent cell-cell adhesion via plasma membrane cell adhesion molecules"/>
    <property type="evidence" value="ECO:0000318"/>
    <property type="project" value="GO_Central"/>
</dbReference>
<dbReference type="GO" id="GO:0007155">
    <property type="term" value="P:cell adhesion"/>
    <property type="evidence" value="ECO:0000304"/>
    <property type="project" value="ProtInc"/>
</dbReference>
<dbReference type="GO" id="GO:0016477">
    <property type="term" value="P:cell migration"/>
    <property type="evidence" value="ECO:0000318"/>
    <property type="project" value="GO_Central"/>
</dbReference>
<dbReference type="GO" id="GO:0000902">
    <property type="term" value="P:cell morphogenesis"/>
    <property type="evidence" value="ECO:0000318"/>
    <property type="project" value="GO_Central"/>
</dbReference>
<dbReference type="GO" id="GO:0044331">
    <property type="term" value="P:cell-cell adhesion mediated by cadherin"/>
    <property type="evidence" value="ECO:0000318"/>
    <property type="project" value="GO_Central"/>
</dbReference>
<dbReference type="GO" id="GO:0007043">
    <property type="term" value="P:cell-cell junction assembly"/>
    <property type="evidence" value="ECO:0000318"/>
    <property type="project" value="GO_Central"/>
</dbReference>
<dbReference type="GO" id="GO:0007156">
    <property type="term" value="P:homophilic cell adhesion via plasma membrane adhesion molecules"/>
    <property type="evidence" value="ECO:0007669"/>
    <property type="project" value="InterPro"/>
</dbReference>
<dbReference type="GO" id="GO:0050807">
    <property type="term" value="P:regulation of synapse organization"/>
    <property type="evidence" value="ECO:0007669"/>
    <property type="project" value="Ensembl"/>
</dbReference>
<dbReference type="GO" id="GO:0009409">
    <property type="term" value="P:response to cold"/>
    <property type="evidence" value="ECO:0007669"/>
    <property type="project" value="Ensembl"/>
</dbReference>
<dbReference type="GO" id="GO:0035249">
    <property type="term" value="P:synaptic transmission, glutamatergic"/>
    <property type="evidence" value="ECO:0007669"/>
    <property type="project" value="Ensembl"/>
</dbReference>
<dbReference type="CDD" id="cd11304">
    <property type="entry name" value="Cadherin_repeat"/>
    <property type="match status" value="5"/>
</dbReference>
<dbReference type="FunFam" id="4.10.900.10:FF:000001">
    <property type="entry name" value="Cadherin 2"/>
    <property type="match status" value="1"/>
</dbReference>
<dbReference type="FunFam" id="2.60.40.60:FF:000008">
    <property type="entry name" value="Cadherin 24"/>
    <property type="match status" value="1"/>
</dbReference>
<dbReference type="FunFam" id="2.60.40.60:FF:000009">
    <property type="entry name" value="Cadherin 24"/>
    <property type="match status" value="1"/>
</dbReference>
<dbReference type="FunFam" id="2.60.40.60:FF:000012">
    <property type="entry name" value="Cadherin 24"/>
    <property type="match status" value="1"/>
</dbReference>
<dbReference type="FunFam" id="2.60.40.60:FF:000017">
    <property type="entry name" value="Cadherin 24"/>
    <property type="match status" value="1"/>
</dbReference>
<dbReference type="FunFam" id="2.60.40.60:FF:000014">
    <property type="entry name" value="Cadherin 8"/>
    <property type="match status" value="1"/>
</dbReference>
<dbReference type="Gene3D" id="2.60.40.60">
    <property type="entry name" value="Cadherins"/>
    <property type="match status" value="5"/>
</dbReference>
<dbReference type="Gene3D" id="4.10.900.10">
    <property type="entry name" value="TCF3-CBD (Catenin binding domain)"/>
    <property type="match status" value="1"/>
</dbReference>
<dbReference type="InterPro" id="IPR039808">
    <property type="entry name" value="Cadherin"/>
</dbReference>
<dbReference type="InterPro" id="IPR002126">
    <property type="entry name" value="Cadherin-like_dom"/>
</dbReference>
<dbReference type="InterPro" id="IPR015919">
    <property type="entry name" value="Cadherin-like_sf"/>
</dbReference>
<dbReference type="InterPro" id="IPR020894">
    <property type="entry name" value="Cadherin_CS"/>
</dbReference>
<dbReference type="InterPro" id="IPR000233">
    <property type="entry name" value="Cadherin_Y-type_LIR"/>
</dbReference>
<dbReference type="InterPro" id="IPR027397">
    <property type="entry name" value="Catenin-bd_sf"/>
</dbReference>
<dbReference type="PANTHER" id="PTHR24027">
    <property type="entry name" value="CADHERIN-23"/>
    <property type="match status" value="1"/>
</dbReference>
<dbReference type="PANTHER" id="PTHR24027:SF273">
    <property type="entry name" value="CADHERIN-8"/>
    <property type="match status" value="1"/>
</dbReference>
<dbReference type="Pfam" id="PF01049">
    <property type="entry name" value="CADH_Y-type_LIR"/>
    <property type="match status" value="1"/>
</dbReference>
<dbReference type="Pfam" id="PF00028">
    <property type="entry name" value="Cadherin"/>
    <property type="match status" value="5"/>
</dbReference>
<dbReference type="PRINTS" id="PR00205">
    <property type="entry name" value="CADHERIN"/>
</dbReference>
<dbReference type="SMART" id="SM00112">
    <property type="entry name" value="CA"/>
    <property type="match status" value="5"/>
</dbReference>
<dbReference type="SUPFAM" id="SSF49313">
    <property type="entry name" value="Cadherin-like"/>
    <property type="match status" value="5"/>
</dbReference>
<dbReference type="PROSITE" id="PS00232">
    <property type="entry name" value="CADHERIN_1"/>
    <property type="match status" value="3"/>
</dbReference>
<dbReference type="PROSITE" id="PS50268">
    <property type="entry name" value="CADHERIN_2"/>
    <property type="match status" value="5"/>
</dbReference>